<comment type="function">
    <text evidence="1">This is one of the proteins that bind and probably mediate the attachment of the 5S RNA into the large ribosomal subunit, where it forms part of the central protuberance.</text>
</comment>
<comment type="subunit">
    <text evidence="1">Part of the 50S ribosomal subunit; part of the 5S rRNA/L5/L18/L25 subcomplex. Contacts the 5S and 23S rRNAs.</text>
</comment>
<comment type="similarity">
    <text evidence="1">Belongs to the universal ribosomal protein uL18 family.</text>
</comment>
<keyword id="KW-0687">Ribonucleoprotein</keyword>
<keyword id="KW-0689">Ribosomal protein</keyword>
<keyword id="KW-0694">RNA-binding</keyword>
<keyword id="KW-0699">rRNA-binding</keyword>
<organism>
    <name type="scientific">Coxiella burnetii (strain Dugway 5J108-111)</name>
    <dbReference type="NCBI Taxonomy" id="434922"/>
    <lineage>
        <taxon>Bacteria</taxon>
        <taxon>Pseudomonadati</taxon>
        <taxon>Pseudomonadota</taxon>
        <taxon>Gammaproteobacteria</taxon>
        <taxon>Legionellales</taxon>
        <taxon>Coxiellaceae</taxon>
        <taxon>Coxiella</taxon>
    </lineage>
</organism>
<protein>
    <recommendedName>
        <fullName evidence="1">Large ribosomal subunit protein uL18</fullName>
    </recommendedName>
    <alternativeName>
        <fullName evidence="2">50S ribosomal protein L18</fullName>
    </alternativeName>
</protein>
<evidence type="ECO:0000255" key="1">
    <source>
        <dbReference type="HAMAP-Rule" id="MF_01337"/>
    </source>
</evidence>
<evidence type="ECO:0000305" key="2"/>
<gene>
    <name evidence="1" type="primary">rplR</name>
    <name type="ordered locus">CBUD_1838</name>
</gene>
<sequence length="117" mass="13106">MDKQEKRIRRARRTRAKIKELGAVRLCVHRSLNHIYAQLISPRDSKVLVCASTLEKEVRSQIKHGGNIQAATAIGKLIAQRAKKAGVTKVAFDRSGYKYHGRVRALAEAVREGGIEF</sequence>
<dbReference type="EMBL" id="CP000733">
    <property type="protein sequence ID" value="ABS76680.1"/>
    <property type="molecule type" value="Genomic_DNA"/>
</dbReference>
<dbReference type="RefSeq" id="WP_005771517.1">
    <property type="nucleotide sequence ID" value="NC_009727.1"/>
</dbReference>
<dbReference type="SMR" id="A9KD15"/>
<dbReference type="KEGG" id="cbd:CBUD_1838"/>
<dbReference type="HOGENOM" id="CLU_098841_0_1_6"/>
<dbReference type="Proteomes" id="UP000008555">
    <property type="component" value="Chromosome"/>
</dbReference>
<dbReference type="GO" id="GO:0022625">
    <property type="term" value="C:cytosolic large ribosomal subunit"/>
    <property type="evidence" value="ECO:0007669"/>
    <property type="project" value="TreeGrafter"/>
</dbReference>
<dbReference type="GO" id="GO:0008097">
    <property type="term" value="F:5S rRNA binding"/>
    <property type="evidence" value="ECO:0007669"/>
    <property type="project" value="TreeGrafter"/>
</dbReference>
<dbReference type="GO" id="GO:0003735">
    <property type="term" value="F:structural constituent of ribosome"/>
    <property type="evidence" value="ECO:0007669"/>
    <property type="project" value="InterPro"/>
</dbReference>
<dbReference type="GO" id="GO:0006412">
    <property type="term" value="P:translation"/>
    <property type="evidence" value="ECO:0007669"/>
    <property type="project" value="UniProtKB-UniRule"/>
</dbReference>
<dbReference type="CDD" id="cd00432">
    <property type="entry name" value="Ribosomal_L18_L5e"/>
    <property type="match status" value="1"/>
</dbReference>
<dbReference type="FunFam" id="3.30.420.100:FF:000001">
    <property type="entry name" value="50S ribosomal protein L18"/>
    <property type="match status" value="1"/>
</dbReference>
<dbReference type="Gene3D" id="3.30.420.100">
    <property type="match status" value="1"/>
</dbReference>
<dbReference type="HAMAP" id="MF_01337_B">
    <property type="entry name" value="Ribosomal_uL18_B"/>
    <property type="match status" value="1"/>
</dbReference>
<dbReference type="InterPro" id="IPR004389">
    <property type="entry name" value="Ribosomal_uL18_bac-type"/>
</dbReference>
<dbReference type="InterPro" id="IPR005484">
    <property type="entry name" value="Ribosomal_uL18_bac/euk"/>
</dbReference>
<dbReference type="NCBIfam" id="TIGR00060">
    <property type="entry name" value="L18_bact"/>
    <property type="match status" value="1"/>
</dbReference>
<dbReference type="PANTHER" id="PTHR12899">
    <property type="entry name" value="39S RIBOSOMAL PROTEIN L18, MITOCHONDRIAL"/>
    <property type="match status" value="1"/>
</dbReference>
<dbReference type="PANTHER" id="PTHR12899:SF3">
    <property type="entry name" value="LARGE RIBOSOMAL SUBUNIT PROTEIN UL18M"/>
    <property type="match status" value="1"/>
</dbReference>
<dbReference type="Pfam" id="PF00861">
    <property type="entry name" value="Ribosomal_L18p"/>
    <property type="match status" value="1"/>
</dbReference>
<dbReference type="SUPFAM" id="SSF53137">
    <property type="entry name" value="Translational machinery components"/>
    <property type="match status" value="1"/>
</dbReference>
<name>RL18_COXBN</name>
<feature type="chain" id="PRO_1000086660" description="Large ribosomal subunit protein uL18">
    <location>
        <begin position="1"/>
        <end position="117"/>
    </location>
</feature>
<accession>A9KD15</accession>
<reference key="1">
    <citation type="journal article" date="2009" name="Infect. Immun.">
        <title>Comparative genomics reveal extensive transposon-mediated genomic plasticity and diversity among potential effector proteins within the genus Coxiella.</title>
        <authorList>
            <person name="Beare P.A."/>
            <person name="Unsworth N."/>
            <person name="Andoh M."/>
            <person name="Voth D.E."/>
            <person name="Omsland A."/>
            <person name="Gilk S.D."/>
            <person name="Williams K.P."/>
            <person name="Sobral B.W."/>
            <person name="Kupko J.J. III"/>
            <person name="Porcella S.F."/>
            <person name="Samuel J.E."/>
            <person name="Heinzen R.A."/>
        </authorList>
    </citation>
    <scope>NUCLEOTIDE SEQUENCE [LARGE SCALE GENOMIC DNA]</scope>
    <source>
        <strain>Dugway 5J108-111</strain>
    </source>
</reference>
<proteinExistence type="inferred from homology"/>